<sequence length="215" mass="23926">MLQVYLVRHGETQWNAERRIQGQSDSPLTAKGEQQAMQVGERARSLGITHIISSDLGRTKRTAEIIAQACGCDITFDSRLRELDMGVLEKRQIDSLTEEEEGWRRQLVNGTQDGRIPDGESMQELSERVHAALASCLELPQGSRPLLVSHGIALGCLVSTILGLPAWAERRLRLRNCSISRVDYQESQWLASGWVVETAGDVSHLDAPALDELQR</sequence>
<dbReference type="EC" id="5.4.2.-" evidence="1"/>
<dbReference type="EMBL" id="CP000880">
    <property type="protein sequence ID" value="ABX22842.1"/>
    <property type="molecule type" value="Genomic_DNA"/>
</dbReference>
<dbReference type="SMR" id="A9MR94"/>
<dbReference type="STRING" id="41514.SARI_02998"/>
<dbReference type="KEGG" id="ses:SARI_02998"/>
<dbReference type="HOGENOM" id="CLU_033323_9_5_6"/>
<dbReference type="UniPathway" id="UPA00109">
    <property type="reaction ID" value="UER00186"/>
</dbReference>
<dbReference type="Proteomes" id="UP000002084">
    <property type="component" value="Chromosome"/>
</dbReference>
<dbReference type="GO" id="GO:0005737">
    <property type="term" value="C:cytoplasm"/>
    <property type="evidence" value="ECO:0007669"/>
    <property type="project" value="TreeGrafter"/>
</dbReference>
<dbReference type="GO" id="GO:0016791">
    <property type="term" value="F:phosphatase activity"/>
    <property type="evidence" value="ECO:0007669"/>
    <property type="project" value="TreeGrafter"/>
</dbReference>
<dbReference type="GO" id="GO:0004619">
    <property type="term" value="F:phosphoglycerate mutase activity"/>
    <property type="evidence" value="ECO:0007669"/>
    <property type="project" value="UniProtKB-UniRule"/>
</dbReference>
<dbReference type="GO" id="GO:0006096">
    <property type="term" value="P:glycolytic process"/>
    <property type="evidence" value="ECO:0007669"/>
    <property type="project" value="UniProtKB-UniRule"/>
</dbReference>
<dbReference type="CDD" id="cd07067">
    <property type="entry name" value="HP_PGM_like"/>
    <property type="match status" value="1"/>
</dbReference>
<dbReference type="Gene3D" id="3.40.50.1240">
    <property type="entry name" value="Phosphoglycerate mutase-like"/>
    <property type="match status" value="1"/>
</dbReference>
<dbReference type="HAMAP" id="MF_01040">
    <property type="entry name" value="PGAM_GpmB"/>
    <property type="match status" value="1"/>
</dbReference>
<dbReference type="InterPro" id="IPR013078">
    <property type="entry name" value="His_Pase_superF_clade-1"/>
</dbReference>
<dbReference type="InterPro" id="IPR029033">
    <property type="entry name" value="His_PPase_superfam"/>
</dbReference>
<dbReference type="InterPro" id="IPR001345">
    <property type="entry name" value="PG/BPGM_mutase_AS"/>
</dbReference>
<dbReference type="InterPro" id="IPR050275">
    <property type="entry name" value="PGM_Phosphatase"/>
</dbReference>
<dbReference type="InterPro" id="IPR023086">
    <property type="entry name" value="Phosphoglycerate_mutase_GpmB"/>
</dbReference>
<dbReference type="NCBIfam" id="NF002901">
    <property type="entry name" value="PRK03482.1"/>
    <property type="match status" value="1"/>
</dbReference>
<dbReference type="PANTHER" id="PTHR48100">
    <property type="entry name" value="BROAD-SPECIFICITY PHOSPHATASE YOR283W-RELATED"/>
    <property type="match status" value="1"/>
</dbReference>
<dbReference type="PANTHER" id="PTHR48100:SF1">
    <property type="entry name" value="HISTIDINE PHOSPHATASE FAMILY PROTEIN-RELATED"/>
    <property type="match status" value="1"/>
</dbReference>
<dbReference type="Pfam" id="PF00300">
    <property type="entry name" value="His_Phos_1"/>
    <property type="match status" value="1"/>
</dbReference>
<dbReference type="SMART" id="SM00855">
    <property type="entry name" value="PGAM"/>
    <property type="match status" value="1"/>
</dbReference>
<dbReference type="SUPFAM" id="SSF53254">
    <property type="entry name" value="Phosphoglycerate mutase-like"/>
    <property type="match status" value="1"/>
</dbReference>
<dbReference type="PROSITE" id="PS00175">
    <property type="entry name" value="PG_MUTASE"/>
    <property type="match status" value="1"/>
</dbReference>
<proteinExistence type="inferred from homology"/>
<protein>
    <recommendedName>
        <fullName evidence="1">Probable phosphoglycerate mutase GpmB</fullName>
        <ecNumber evidence="1">5.4.2.-</ecNumber>
    </recommendedName>
    <alternativeName>
        <fullName evidence="1">PGAM</fullName>
    </alternativeName>
    <alternativeName>
        <fullName evidence="1">Phosphoglyceromutase</fullName>
    </alternativeName>
</protein>
<accession>A9MR94</accession>
<name>GPMB_SALAR</name>
<keyword id="KW-0324">Glycolysis</keyword>
<keyword id="KW-0413">Isomerase</keyword>
<keyword id="KW-1185">Reference proteome</keyword>
<evidence type="ECO:0000255" key="1">
    <source>
        <dbReference type="HAMAP-Rule" id="MF_01040"/>
    </source>
</evidence>
<comment type="catalytic activity">
    <reaction evidence="1">
        <text>(2R)-2-phosphoglycerate = (2R)-3-phosphoglycerate</text>
        <dbReference type="Rhea" id="RHEA:15901"/>
        <dbReference type="ChEBI" id="CHEBI:58272"/>
        <dbReference type="ChEBI" id="CHEBI:58289"/>
    </reaction>
</comment>
<comment type="pathway">
    <text evidence="1">Carbohydrate degradation; glycolysis; pyruvate from D-glyceraldehyde 3-phosphate: step 3/5.</text>
</comment>
<comment type="similarity">
    <text evidence="1">Belongs to the phosphoglycerate mutase family. GpmB subfamily.</text>
</comment>
<reference key="1">
    <citation type="submission" date="2007-11" db="EMBL/GenBank/DDBJ databases">
        <authorList>
            <consortium name="The Salmonella enterica serovar Arizonae Genome Sequencing Project"/>
            <person name="McClelland M."/>
            <person name="Sanderson E.K."/>
            <person name="Porwollik S."/>
            <person name="Spieth J."/>
            <person name="Clifton W.S."/>
            <person name="Fulton R."/>
            <person name="Chunyan W."/>
            <person name="Wollam A."/>
            <person name="Shah N."/>
            <person name="Pepin K."/>
            <person name="Bhonagiri V."/>
            <person name="Nash W."/>
            <person name="Johnson M."/>
            <person name="Thiruvilangam P."/>
            <person name="Wilson R."/>
        </authorList>
    </citation>
    <scope>NUCLEOTIDE SEQUENCE [LARGE SCALE GENOMIC DNA]</scope>
    <source>
        <strain>ATCC BAA-731 / CDC346-86 / RSK2980</strain>
    </source>
</reference>
<organism>
    <name type="scientific">Salmonella arizonae (strain ATCC BAA-731 / CDC346-86 / RSK2980)</name>
    <dbReference type="NCBI Taxonomy" id="41514"/>
    <lineage>
        <taxon>Bacteria</taxon>
        <taxon>Pseudomonadati</taxon>
        <taxon>Pseudomonadota</taxon>
        <taxon>Gammaproteobacteria</taxon>
        <taxon>Enterobacterales</taxon>
        <taxon>Enterobacteriaceae</taxon>
        <taxon>Salmonella</taxon>
    </lineage>
</organism>
<feature type="chain" id="PRO_1000084336" description="Probable phosphoglycerate mutase GpmB">
    <location>
        <begin position="1"/>
        <end position="215"/>
    </location>
</feature>
<feature type="active site" description="Tele-phosphohistidine intermediate" evidence="1">
    <location>
        <position position="9"/>
    </location>
</feature>
<feature type="active site" description="Proton donor/acceptor" evidence="1">
    <location>
        <position position="82"/>
    </location>
</feature>
<feature type="binding site" evidence="1">
    <location>
        <begin position="8"/>
        <end position="15"/>
    </location>
    <ligand>
        <name>substrate</name>
    </ligand>
</feature>
<feature type="binding site" evidence="1">
    <location>
        <begin position="21"/>
        <end position="22"/>
    </location>
    <ligand>
        <name>substrate</name>
    </ligand>
</feature>
<feature type="binding site" evidence="1">
    <location>
        <position position="58"/>
    </location>
    <ligand>
        <name>substrate</name>
    </ligand>
</feature>
<feature type="binding site" evidence="1">
    <location>
        <position position="60"/>
    </location>
    <ligand>
        <name>substrate</name>
    </ligand>
</feature>
<feature type="binding site" evidence="1">
    <location>
        <begin position="82"/>
        <end position="85"/>
    </location>
    <ligand>
        <name>substrate</name>
    </ligand>
</feature>
<feature type="binding site" evidence="1">
    <location>
        <begin position="104"/>
        <end position="105"/>
    </location>
    <ligand>
        <name>substrate</name>
    </ligand>
</feature>
<feature type="binding site" evidence="1">
    <location>
        <begin position="151"/>
        <end position="152"/>
    </location>
    <ligand>
        <name>substrate</name>
    </ligand>
</feature>
<feature type="site" description="Transition state stabilizer" evidence="1">
    <location>
        <position position="150"/>
    </location>
</feature>
<gene>
    <name evidence="1" type="primary">gpmB</name>
    <name type="ordered locus">SARI_02998</name>
</gene>